<proteinExistence type="inferred from homology"/>
<name>COAD_SALPA</name>
<evidence type="ECO:0000255" key="1">
    <source>
        <dbReference type="HAMAP-Rule" id="MF_00151"/>
    </source>
</evidence>
<gene>
    <name evidence="1" type="primary">coaD</name>
    <name type="ordered locus">SPA3577</name>
</gene>
<feature type="chain" id="PRO_1000011227" description="Phosphopantetheine adenylyltransferase">
    <location>
        <begin position="1"/>
        <end position="159"/>
    </location>
</feature>
<feature type="binding site" evidence="1">
    <location>
        <begin position="10"/>
        <end position="11"/>
    </location>
    <ligand>
        <name>ATP</name>
        <dbReference type="ChEBI" id="CHEBI:30616"/>
    </ligand>
</feature>
<feature type="binding site" evidence="1">
    <location>
        <position position="10"/>
    </location>
    <ligand>
        <name>substrate</name>
    </ligand>
</feature>
<feature type="binding site" evidence="1">
    <location>
        <position position="18"/>
    </location>
    <ligand>
        <name>ATP</name>
        <dbReference type="ChEBI" id="CHEBI:30616"/>
    </ligand>
</feature>
<feature type="binding site" evidence="1">
    <location>
        <position position="42"/>
    </location>
    <ligand>
        <name>substrate</name>
    </ligand>
</feature>
<feature type="binding site" evidence="1">
    <location>
        <position position="74"/>
    </location>
    <ligand>
        <name>substrate</name>
    </ligand>
</feature>
<feature type="binding site" evidence="1">
    <location>
        <position position="88"/>
    </location>
    <ligand>
        <name>substrate</name>
    </ligand>
</feature>
<feature type="binding site" evidence="1">
    <location>
        <begin position="89"/>
        <end position="91"/>
    </location>
    <ligand>
        <name>ATP</name>
        <dbReference type="ChEBI" id="CHEBI:30616"/>
    </ligand>
</feature>
<feature type="binding site" evidence="1">
    <location>
        <position position="99"/>
    </location>
    <ligand>
        <name>ATP</name>
        <dbReference type="ChEBI" id="CHEBI:30616"/>
    </ligand>
</feature>
<feature type="binding site" evidence="1">
    <location>
        <begin position="124"/>
        <end position="130"/>
    </location>
    <ligand>
        <name>ATP</name>
        <dbReference type="ChEBI" id="CHEBI:30616"/>
    </ligand>
</feature>
<feature type="site" description="Transition state stabilizer" evidence="1">
    <location>
        <position position="18"/>
    </location>
</feature>
<keyword id="KW-0067">ATP-binding</keyword>
<keyword id="KW-0173">Coenzyme A biosynthesis</keyword>
<keyword id="KW-0963">Cytoplasm</keyword>
<keyword id="KW-0460">Magnesium</keyword>
<keyword id="KW-0547">Nucleotide-binding</keyword>
<keyword id="KW-0548">Nucleotidyltransferase</keyword>
<keyword id="KW-0808">Transferase</keyword>
<dbReference type="EC" id="2.7.7.3" evidence="1"/>
<dbReference type="EMBL" id="CP000026">
    <property type="protein sequence ID" value="AAV79378.1"/>
    <property type="molecule type" value="Genomic_DNA"/>
</dbReference>
<dbReference type="RefSeq" id="WP_001171888.1">
    <property type="nucleotide sequence ID" value="NC_006511.1"/>
</dbReference>
<dbReference type="SMR" id="Q5PC10"/>
<dbReference type="KEGG" id="spt:SPA3577"/>
<dbReference type="HOGENOM" id="CLU_100149_0_1_6"/>
<dbReference type="UniPathway" id="UPA00241">
    <property type="reaction ID" value="UER00355"/>
</dbReference>
<dbReference type="Proteomes" id="UP000008185">
    <property type="component" value="Chromosome"/>
</dbReference>
<dbReference type="GO" id="GO:0005737">
    <property type="term" value="C:cytoplasm"/>
    <property type="evidence" value="ECO:0007669"/>
    <property type="project" value="UniProtKB-SubCell"/>
</dbReference>
<dbReference type="GO" id="GO:0005524">
    <property type="term" value="F:ATP binding"/>
    <property type="evidence" value="ECO:0007669"/>
    <property type="project" value="UniProtKB-KW"/>
</dbReference>
<dbReference type="GO" id="GO:0004595">
    <property type="term" value="F:pantetheine-phosphate adenylyltransferase activity"/>
    <property type="evidence" value="ECO:0007669"/>
    <property type="project" value="UniProtKB-UniRule"/>
</dbReference>
<dbReference type="GO" id="GO:0015937">
    <property type="term" value="P:coenzyme A biosynthetic process"/>
    <property type="evidence" value="ECO:0007669"/>
    <property type="project" value="UniProtKB-UniRule"/>
</dbReference>
<dbReference type="CDD" id="cd02163">
    <property type="entry name" value="PPAT"/>
    <property type="match status" value="1"/>
</dbReference>
<dbReference type="FunFam" id="3.40.50.620:FF:000012">
    <property type="entry name" value="Phosphopantetheine adenylyltransferase"/>
    <property type="match status" value="1"/>
</dbReference>
<dbReference type="Gene3D" id="3.40.50.620">
    <property type="entry name" value="HUPs"/>
    <property type="match status" value="1"/>
</dbReference>
<dbReference type="HAMAP" id="MF_00151">
    <property type="entry name" value="PPAT_bact"/>
    <property type="match status" value="1"/>
</dbReference>
<dbReference type="InterPro" id="IPR004821">
    <property type="entry name" value="Cyt_trans-like"/>
</dbReference>
<dbReference type="InterPro" id="IPR001980">
    <property type="entry name" value="PPAT"/>
</dbReference>
<dbReference type="InterPro" id="IPR014729">
    <property type="entry name" value="Rossmann-like_a/b/a_fold"/>
</dbReference>
<dbReference type="NCBIfam" id="TIGR01510">
    <property type="entry name" value="coaD_prev_kdtB"/>
    <property type="match status" value="1"/>
</dbReference>
<dbReference type="NCBIfam" id="TIGR00125">
    <property type="entry name" value="cyt_tran_rel"/>
    <property type="match status" value="1"/>
</dbReference>
<dbReference type="PANTHER" id="PTHR21342">
    <property type="entry name" value="PHOSPHOPANTETHEINE ADENYLYLTRANSFERASE"/>
    <property type="match status" value="1"/>
</dbReference>
<dbReference type="PANTHER" id="PTHR21342:SF1">
    <property type="entry name" value="PHOSPHOPANTETHEINE ADENYLYLTRANSFERASE"/>
    <property type="match status" value="1"/>
</dbReference>
<dbReference type="Pfam" id="PF01467">
    <property type="entry name" value="CTP_transf_like"/>
    <property type="match status" value="1"/>
</dbReference>
<dbReference type="PRINTS" id="PR01020">
    <property type="entry name" value="LPSBIOSNTHSS"/>
</dbReference>
<dbReference type="SUPFAM" id="SSF52374">
    <property type="entry name" value="Nucleotidylyl transferase"/>
    <property type="match status" value="1"/>
</dbReference>
<organism>
    <name type="scientific">Salmonella paratyphi A (strain ATCC 9150 / SARB42)</name>
    <dbReference type="NCBI Taxonomy" id="295319"/>
    <lineage>
        <taxon>Bacteria</taxon>
        <taxon>Pseudomonadati</taxon>
        <taxon>Pseudomonadota</taxon>
        <taxon>Gammaproteobacteria</taxon>
        <taxon>Enterobacterales</taxon>
        <taxon>Enterobacteriaceae</taxon>
        <taxon>Salmonella</taxon>
    </lineage>
</organism>
<protein>
    <recommendedName>
        <fullName evidence="1">Phosphopantetheine adenylyltransferase</fullName>
        <ecNumber evidence="1">2.7.7.3</ecNumber>
    </recommendedName>
    <alternativeName>
        <fullName evidence="1">Dephospho-CoA pyrophosphorylase</fullName>
    </alternativeName>
    <alternativeName>
        <fullName evidence="1">Pantetheine-phosphate adenylyltransferase</fullName>
        <shortName evidence="1">PPAT</shortName>
    </alternativeName>
</protein>
<reference key="1">
    <citation type="journal article" date="2004" name="Nat. Genet.">
        <title>Comparison of genome degradation in Paratyphi A and Typhi, human-restricted serovars of Salmonella enterica that cause typhoid.</title>
        <authorList>
            <person name="McClelland M."/>
            <person name="Sanderson K.E."/>
            <person name="Clifton S.W."/>
            <person name="Latreille P."/>
            <person name="Porwollik S."/>
            <person name="Sabo A."/>
            <person name="Meyer R."/>
            <person name="Bieri T."/>
            <person name="Ozersky P."/>
            <person name="McLellan M."/>
            <person name="Harkins C.R."/>
            <person name="Wang C."/>
            <person name="Nguyen C."/>
            <person name="Berghoff A."/>
            <person name="Elliott G."/>
            <person name="Kohlberg S."/>
            <person name="Strong C."/>
            <person name="Du F."/>
            <person name="Carter J."/>
            <person name="Kremizki C."/>
            <person name="Layman D."/>
            <person name="Leonard S."/>
            <person name="Sun H."/>
            <person name="Fulton L."/>
            <person name="Nash W."/>
            <person name="Miner T."/>
            <person name="Minx P."/>
            <person name="Delehaunty K."/>
            <person name="Fronick C."/>
            <person name="Magrini V."/>
            <person name="Nhan M."/>
            <person name="Warren W."/>
            <person name="Florea L."/>
            <person name="Spieth J."/>
            <person name="Wilson R.K."/>
        </authorList>
    </citation>
    <scope>NUCLEOTIDE SEQUENCE [LARGE SCALE GENOMIC DNA]</scope>
    <source>
        <strain>ATCC 9150 / SARB42</strain>
    </source>
</reference>
<accession>Q5PC10</accession>
<sequence>MQKRAIYPGTFDPITNGHLDIVTRATQMFDHVILAIAASPGKKPMFTLNERVALAQKATAHLGNVEVVGFSDLMANFARDRQANILIRGLRAVADFEYEMQLAHMNRHLMPQLESVFLMPSKEWSFISSSLVKEVARHQGDVTHFLPDNVHQALMDKLK</sequence>
<comment type="function">
    <text evidence="1">Reversibly transfers an adenylyl group from ATP to 4'-phosphopantetheine, yielding dephospho-CoA (dPCoA) and pyrophosphate.</text>
</comment>
<comment type="catalytic activity">
    <reaction evidence="1">
        <text>(R)-4'-phosphopantetheine + ATP + H(+) = 3'-dephospho-CoA + diphosphate</text>
        <dbReference type="Rhea" id="RHEA:19801"/>
        <dbReference type="ChEBI" id="CHEBI:15378"/>
        <dbReference type="ChEBI" id="CHEBI:30616"/>
        <dbReference type="ChEBI" id="CHEBI:33019"/>
        <dbReference type="ChEBI" id="CHEBI:57328"/>
        <dbReference type="ChEBI" id="CHEBI:61723"/>
        <dbReference type="EC" id="2.7.7.3"/>
    </reaction>
</comment>
<comment type="cofactor">
    <cofactor evidence="1">
        <name>Mg(2+)</name>
        <dbReference type="ChEBI" id="CHEBI:18420"/>
    </cofactor>
</comment>
<comment type="pathway">
    <text evidence="1">Cofactor biosynthesis; coenzyme A biosynthesis; CoA from (R)-pantothenate: step 4/5.</text>
</comment>
<comment type="subunit">
    <text evidence="1">Homohexamer.</text>
</comment>
<comment type="subcellular location">
    <subcellularLocation>
        <location evidence="1">Cytoplasm</location>
    </subcellularLocation>
</comment>
<comment type="similarity">
    <text evidence="1">Belongs to the bacterial CoaD family.</text>
</comment>